<name>PKS1_AURME</name>
<sequence length="2190" mass="234837">MASSALTPVAIVGYACKLPGDVSSPDDLWELCSRGRTGWGPTPSTRYSKDAYYHPAPGKHGCINTEGGYFLKEDPARFDAPFFNMTIQEATALDPQQRLLLECTFEAFENSGMTKEGIAGKDIGVFVGGSFADYEVNNTRDIDTAPTYQATGCAPAMQSNRLSYYFDLRGPSMTVDTACSSSLVALHSAMQSLRNGESSSAVVAAAHLNLTPDFFVTMSNTQLLNDAGKTFAFDHRAISGFARGEGAGSMILKPLDAAIRDGDVIRAVIHNSGVNQDGKTNGITVPNGRAQSDLIKQVYSKAGLDPAECGFSECHGTGTKVGDPIEVAGIHEALGAGRSPRNPLFIGSVKSNVGHLEGASGIVSVIKAAMMLEKGMVLPNANFETANPNIPLEQYNMKVPTSTRPWPRGKKYVSVSNYGFGGANAHVVLGAAPKGLKTTMTTIRSLEDAPEEPLCKLFVLSAHDSQALQKEITDLGVFLEQRPEVFEKLLAGNVAYTLGERRSHLPCRLAIAAVSSDELGQSLATTKVPTFRARNEPTLGFVFTGQGAQWATMGAELARDYPIFAAALDTADDTLKALGADFSLKEEMLKPADISLINAAHISQPACTALQIALTMLLSSWGIHPAAVVGHSSGEIGCAFAAGIIGLEDAMKIAYYRGQCMLSLKKKAVGKPQGTMMAVGTSAENVRPLLDAVSKGYITVACINSPASVTLSGDVEAVEELQPILTEKSIFNRQLKVGVAYHSAHLEPVVDEYLDLIKNIQPASTATATFYSSLLGRVAEASELTPEYWVQNLTSPVRFSGGLSAMARETGSKTIDHLVELGPHSALQGPIRDTLATIDAAKGKMHYVSVLARGQNASECALRMAGALYMKGLSLTFGEINFPRTKSVNQKLITDLPRYPFNHETRYWHESRLAQKHCFKEGGRNDLLGSLADWSNDLEPTWRNIVKLDDLPFLRSHKMQDMPVFPMAGYMGMALEAAARRAIARGVQFDRFEIREFVVSSALVFNEDTDVEMTITLKPYSEGLRGAASDLWDDYKICSWDAKRGWLQHCHGLVGVRNSPAANAVDAHRIQSASKAFEACKASIISASTETVDVQAMYNTLTTIGAGYGPVFTGLEPCQASDTTAHAQLVVPDTKSLMPKGYETELIVHPALLDQIIQIVWPIFGAGRQGLDTLYMPTFVKNFSISRNFASMLGNGLEVFGAGAPNNEAPEPTKFGFFVVGSSDASEPLVQFDGLTMTPLRESSGSSGPQARELCYKIDWQTVSDEDIGLEKSSSDASDTPIKADSLVSTPFTRDEAVCVVYNKATEKDLAAEVADNVWKTSGVQAELVTLSKVIPADKRVIFVSTGNNVLSGIDATMFGTLRQMLLSARKVLWIYKEGPDVDDVDGSMVVGFTRAIRSETSANIVTLGLQQATGKTLVENIFTVLTKTSADSPSTFKDDKEFILKGDDLLVPKVVDDEELNVRLHQESQDSVIYQQPFAQSDRRLKMVIATLGSLDSFYFVDDEPKPLNDNEVEIEVKATGMNFKDVVVSMGQLNQPYIGVECAGVIAAVGKKVTDVKVGQSVMAMTEGAYSTYARCLSTSVAPLPEKMDFTAASTIPVVFCTAYYGLFDLGRLTEGESVLIHAAAGGVGQAAIMLAQTCGAEIFATVGSLDKKQHIVKEYGIPEDHIFYSRDTAFGPAIRQVTGGKGVDVVLNSLGGDFLRESWDCLAPFGRFIEIGKADITKNSRLEMAQFEYNVSFASVDLTKVAAYKPKLMKRLLNDVEKLMSSGSIRPVGPITSYGINDVEAAFRSLQSGKSMGKLVIAPQSGDSVQAIAPKKTATLFKEDASYLIVGGTGGLGCSIARWMASRGAKHICLSSRRANITPRLEALITDLSILGTKVSVRACDVADAGSVETLVKDLKKESPIRGVIQGAMVLKDVLYEQMTLDDFSAVVNPKVAGTLNLHNSLGTSELDFFIALSSVAGVVGNRGQAAYAAANVFLDTFMAHRKAQGLPGTSLDLTAVSDVGYLADNSERAADVLRNLGGETIEESEILGLLTAAVTGKITASNNHVITGLKINPGSEPFWCHDAKFSNLLAAAASQSSAEGGNANIPLPQALKSAANGEKALEVLYGALVTKLAAVLMLSVEEMEPSAAVASYSLDSLAAIEVRNWIAREADANVQVLELLTSPSLMELAKLISKKSKLVSFE</sequence>
<reference key="1">
    <citation type="submission" date="2015-12" db="EMBL/GenBank/DDBJ databases">
        <title>Ocean biology.</title>
        <authorList>
            <person name="Fu W."/>
        </authorList>
    </citation>
    <scope>NUCLEOTIDE SEQUENCE [GENOMIC DNA]</scope>
    <source>
        <strain>6-1-2</strain>
    </source>
</reference>
<reference key="2">
    <citation type="journal article" date="2011" name="Biotechnol. Lett.">
        <title>Heavy oils produced by Aureobasidium pullulans.</title>
        <authorList>
            <person name="Manitchotpisit P."/>
            <person name="Price N.P."/>
            <person name="Leathers T.D."/>
            <person name="Punnapayak H."/>
        </authorList>
    </citation>
    <scope>BIOTECHNOLOGY</scope>
</reference>
<reference key="3">
    <citation type="journal article" date="2019" name="Biotechnol. Rep.">
        <title>Inhibition of Streptococcus mutans and S. sobrinus biofilms by liamocins from Aureobasidium pullulans.</title>
        <authorList>
            <person name="Leathers T.D."/>
            <person name="Rich J.O."/>
            <person name="Bischoff K.M."/>
            <person name="Skory C.D."/>
            <person name="Nunnally M.S."/>
        </authorList>
    </citation>
    <scope>BIOTECHNOLOGY</scope>
</reference>
<reference key="4">
    <citation type="journal article" date="2020" name="Biochem. J.">
        <title>Genetic evidences for the core biosynthesis pathway, regulation, transport and secretion of liamocins in yeast-like fungal cells.</title>
        <authorList>
            <person name="Xue S.J."/>
            <person name="Liu G.L."/>
            <person name="Chi Z."/>
            <person name="Gao Z.C."/>
            <person name="Hu Z."/>
            <person name="Chi Z.M."/>
        </authorList>
    </citation>
    <scope>FUNCTION</scope>
    <scope>DISRUPTION PHENOTYPE</scope>
    <scope>DOMAIN</scope>
    <scope>INDUCTION</scope>
</reference>
<reference key="5">
    <citation type="journal article" date="2021" name="Enzyme Microb. Technol.">
        <title>cAMP-PKA and HOG1 signaling pathways regulate liamocin production by different ways via the transcriptional activator Msn2 in Aureobasidium melanogenum.</title>
        <authorList>
            <person name="Zhang M."/>
            <person name="Gao Z.C."/>
            <person name="Chi Z."/>
            <person name="Liu G.L."/>
            <person name="Hu Z."/>
            <person name="Chi Z.M."/>
        </authorList>
    </citation>
    <scope>INDUCTION</scope>
</reference>
<reference key="6">
    <citation type="journal article" date="2024" name="Biotechnol. J.">
        <title>Liamocin biosynthesis is induced by an autogenous host acid activation in Aureobasidium melanogenum.</title>
        <authorList>
            <person name="Zhang M."/>
            <person name="Wei X."/>
            <person name="Wang P."/>
            <person name="Chi Z."/>
            <person name="Liu G.L."/>
            <person name="Chi Z.M."/>
        </authorList>
    </citation>
    <scope>INDUCTION</scope>
</reference>
<gene>
    <name evidence="10" type="primary">PKS1</name>
</gene>
<proteinExistence type="evidence at protein level"/>
<accession>A0A172QE52</accession>
<organism>
    <name type="scientific">Aureobasidium melanogenum</name>
    <name type="common">Aureobasidium pullulans var. melanogenum</name>
    <dbReference type="NCBI Taxonomy" id="46634"/>
    <lineage>
        <taxon>Eukaryota</taxon>
        <taxon>Fungi</taxon>
        <taxon>Dikarya</taxon>
        <taxon>Ascomycota</taxon>
        <taxon>Pezizomycotina</taxon>
        <taxon>Dothideomycetes</taxon>
        <taxon>Dothideomycetidae</taxon>
        <taxon>Dothideales</taxon>
        <taxon>Saccotheciaceae</taxon>
        <taxon>Aureobasidium</taxon>
    </lineage>
</organism>
<evidence type="ECO:0000255" key="1"/>
<evidence type="ECO:0000255" key="2">
    <source>
        <dbReference type="PROSITE-ProRule" id="PRU00258"/>
    </source>
</evidence>
<evidence type="ECO:0000255" key="3">
    <source>
        <dbReference type="PROSITE-ProRule" id="PRU01348"/>
    </source>
</evidence>
<evidence type="ECO:0000255" key="4">
    <source>
        <dbReference type="PROSITE-ProRule" id="PRU01363"/>
    </source>
</evidence>
<evidence type="ECO:0000269" key="5">
    <source>
    </source>
</evidence>
<evidence type="ECO:0000269" key="6">
    <source>
    </source>
</evidence>
<evidence type="ECO:0000269" key="7">
    <source>
    </source>
</evidence>
<evidence type="ECO:0000269" key="8">
    <source>
    </source>
</evidence>
<evidence type="ECO:0000269" key="9">
    <source>
    </source>
</evidence>
<evidence type="ECO:0000303" key="10">
    <source>
    </source>
</evidence>
<evidence type="ECO:0000305" key="11">
    <source>
    </source>
</evidence>
<protein>
    <recommendedName>
        <fullName evidence="10">Highly-reducing polyketide synthase 1</fullName>
        <shortName evidence="10">HR-PKS PKS1</shortName>
        <ecNumber evidence="7">1.-.-.-</ecNumber>
        <ecNumber evidence="7">2.3.1.-</ecNumber>
    </recommendedName>
    <alternativeName>
        <fullName evidence="10">Liamocins biosynthesis cluster protein PKS1</fullName>
    </alternativeName>
</protein>
<keyword id="KW-0012">Acyltransferase</keyword>
<keyword id="KW-0511">Multifunctional enzyme</keyword>
<keyword id="KW-0521">NADP</keyword>
<keyword id="KW-0560">Oxidoreductase</keyword>
<keyword id="KW-0596">Phosphopantetheine</keyword>
<keyword id="KW-0597">Phosphoprotein</keyword>
<keyword id="KW-0808">Transferase</keyword>
<feature type="chain" id="PRO_0000461619" description="Highly-reducing polyketide synthase 1">
    <location>
        <begin position="1"/>
        <end position="2190"/>
    </location>
</feature>
<feature type="domain" description="Ketosynthase family 3 (KS3)" evidence="3">
    <location>
        <begin position="6"/>
        <end position="431"/>
    </location>
</feature>
<feature type="domain" description="Malonyl-CoA:ACP transacylase (MAT)" evidence="1">
    <location>
        <begin position="541"/>
        <end position="857"/>
    </location>
</feature>
<feature type="domain" description="PKS/mFAS DH" evidence="4">
    <location>
        <begin position="925"/>
        <end position="1246"/>
    </location>
</feature>
<feature type="domain" description="Enoyl reductase (ER)" evidence="1">
    <location>
        <begin position="1494"/>
        <end position="1804"/>
    </location>
</feature>
<feature type="domain" description="Ketoreductase (KR)" evidence="1">
    <location>
        <begin position="1828"/>
        <end position="2005"/>
    </location>
</feature>
<feature type="domain" description="Carrier" evidence="2">
    <location>
        <begin position="2107"/>
        <end position="2184"/>
    </location>
</feature>
<feature type="region of interest" description="N-terminal hotdog fold" evidence="4">
    <location>
        <begin position="925"/>
        <end position="1061"/>
    </location>
</feature>
<feature type="region of interest" description="C-terminal hotdog fold" evidence="4">
    <location>
        <begin position="1089"/>
        <end position="1246"/>
    </location>
</feature>
<feature type="active site" description="For beta-ketoacyl synthase activity" evidence="3">
    <location>
        <position position="179"/>
    </location>
</feature>
<feature type="active site" description="For beta-ketoacyl synthase activity" evidence="3">
    <location>
        <position position="315"/>
    </location>
</feature>
<feature type="active site" description="For beta-ketoacyl synthase activity" evidence="3">
    <location>
        <position position="355"/>
    </location>
</feature>
<feature type="active site" description="Proton acceptor; for dehydratase activity" evidence="4">
    <location>
        <position position="957"/>
    </location>
</feature>
<feature type="active site" description="Proton donor; for dehydratase activity" evidence="4">
    <location>
        <position position="1154"/>
    </location>
</feature>
<feature type="modified residue" description="O-(pantetheine 4'-phosphoryl)serine" evidence="2">
    <location>
        <position position="2144"/>
    </location>
</feature>
<dbReference type="EC" id="1.-.-.-" evidence="7"/>
<dbReference type="EC" id="2.3.1.-" evidence="7"/>
<dbReference type="EMBL" id="KU290362">
    <property type="protein sequence ID" value="AND82609.1"/>
    <property type="molecule type" value="Genomic_DNA"/>
</dbReference>
<dbReference type="GO" id="GO:0004315">
    <property type="term" value="F:3-oxoacyl-[acyl-carrier-protein] synthase activity"/>
    <property type="evidence" value="ECO:0007669"/>
    <property type="project" value="InterPro"/>
</dbReference>
<dbReference type="GO" id="GO:0004312">
    <property type="term" value="F:fatty acid synthase activity"/>
    <property type="evidence" value="ECO:0007669"/>
    <property type="project" value="TreeGrafter"/>
</dbReference>
<dbReference type="GO" id="GO:0016491">
    <property type="term" value="F:oxidoreductase activity"/>
    <property type="evidence" value="ECO:0007669"/>
    <property type="project" value="UniProtKB-KW"/>
</dbReference>
<dbReference type="GO" id="GO:0031177">
    <property type="term" value="F:phosphopantetheine binding"/>
    <property type="evidence" value="ECO:0007669"/>
    <property type="project" value="InterPro"/>
</dbReference>
<dbReference type="GO" id="GO:0006633">
    <property type="term" value="P:fatty acid biosynthetic process"/>
    <property type="evidence" value="ECO:0007669"/>
    <property type="project" value="InterPro"/>
</dbReference>
<dbReference type="GO" id="GO:0044550">
    <property type="term" value="P:secondary metabolite biosynthetic process"/>
    <property type="evidence" value="ECO:0007669"/>
    <property type="project" value="UniProtKB-ARBA"/>
</dbReference>
<dbReference type="CDD" id="cd05195">
    <property type="entry name" value="enoyl_red"/>
    <property type="match status" value="1"/>
</dbReference>
<dbReference type="CDD" id="cd05274">
    <property type="entry name" value="KR_FAS_SDR_x"/>
    <property type="match status" value="1"/>
</dbReference>
<dbReference type="CDD" id="cd00833">
    <property type="entry name" value="PKS"/>
    <property type="match status" value="1"/>
</dbReference>
<dbReference type="FunFam" id="3.40.50.720:FF:000209">
    <property type="entry name" value="Polyketide synthase Pks12"/>
    <property type="match status" value="1"/>
</dbReference>
<dbReference type="Gene3D" id="3.30.70.3290">
    <property type="match status" value="1"/>
</dbReference>
<dbReference type="Gene3D" id="3.40.47.10">
    <property type="match status" value="1"/>
</dbReference>
<dbReference type="Gene3D" id="1.10.1200.10">
    <property type="entry name" value="ACP-like"/>
    <property type="match status" value="1"/>
</dbReference>
<dbReference type="Gene3D" id="3.40.366.10">
    <property type="entry name" value="Malonyl-Coenzyme A Acyl Carrier Protein, domain 2"/>
    <property type="match status" value="1"/>
</dbReference>
<dbReference type="Gene3D" id="3.90.180.10">
    <property type="entry name" value="Medium-chain alcohol dehydrogenases, catalytic domain"/>
    <property type="match status" value="1"/>
</dbReference>
<dbReference type="Gene3D" id="3.40.50.720">
    <property type="entry name" value="NAD(P)-binding Rossmann-like Domain"/>
    <property type="match status" value="2"/>
</dbReference>
<dbReference type="Gene3D" id="3.10.129.110">
    <property type="entry name" value="Polyketide synthase dehydratase"/>
    <property type="match status" value="1"/>
</dbReference>
<dbReference type="InterPro" id="IPR001227">
    <property type="entry name" value="Ac_transferase_dom_sf"/>
</dbReference>
<dbReference type="InterPro" id="IPR036736">
    <property type="entry name" value="ACP-like_sf"/>
</dbReference>
<dbReference type="InterPro" id="IPR014043">
    <property type="entry name" value="Acyl_transferase_dom"/>
</dbReference>
<dbReference type="InterPro" id="IPR016035">
    <property type="entry name" value="Acyl_Trfase/lysoPLipase"/>
</dbReference>
<dbReference type="InterPro" id="IPR013154">
    <property type="entry name" value="ADH-like_N"/>
</dbReference>
<dbReference type="InterPro" id="IPR011032">
    <property type="entry name" value="GroES-like_sf"/>
</dbReference>
<dbReference type="InterPro" id="IPR018201">
    <property type="entry name" value="Ketoacyl_synth_AS"/>
</dbReference>
<dbReference type="InterPro" id="IPR014031">
    <property type="entry name" value="Ketoacyl_synth_C"/>
</dbReference>
<dbReference type="InterPro" id="IPR014030">
    <property type="entry name" value="Ketoacyl_synth_N"/>
</dbReference>
<dbReference type="InterPro" id="IPR016036">
    <property type="entry name" value="Malonyl_transacylase_ACP-bd"/>
</dbReference>
<dbReference type="InterPro" id="IPR036291">
    <property type="entry name" value="NAD(P)-bd_dom_sf"/>
</dbReference>
<dbReference type="InterPro" id="IPR032821">
    <property type="entry name" value="PKS_assoc"/>
</dbReference>
<dbReference type="InterPro" id="IPR020841">
    <property type="entry name" value="PKS_Beta-ketoAc_synthase_dom"/>
</dbReference>
<dbReference type="InterPro" id="IPR042104">
    <property type="entry name" value="PKS_dehydratase_sf"/>
</dbReference>
<dbReference type="InterPro" id="IPR020807">
    <property type="entry name" value="PKS_DH"/>
</dbReference>
<dbReference type="InterPro" id="IPR049551">
    <property type="entry name" value="PKS_DH_C"/>
</dbReference>
<dbReference type="InterPro" id="IPR049552">
    <property type="entry name" value="PKS_DH_N"/>
</dbReference>
<dbReference type="InterPro" id="IPR020843">
    <property type="entry name" value="PKS_ER"/>
</dbReference>
<dbReference type="InterPro" id="IPR013968">
    <property type="entry name" value="PKS_KR"/>
</dbReference>
<dbReference type="InterPro" id="IPR049900">
    <property type="entry name" value="PKS_mFAS_DH"/>
</dbReference>
<dbReference type="InterPro" id="IPR050091">
    <property type="entry name" value="PKS_NRPS_Biosynth_Enz"/>
</dbReference>
<dbReference type="InterPro" id="IPR020806">
    <property type="entry name" value="PKS_PP-bd"/>
</dbReference>
<dbReference type="InterPro" id="IPR009081">
    <property type="entry name" value="PP-bd_ACP"/>
</dbReference>
<dbReference type="InterPro" id="IPR016039">
    <property type="entry name" value="Thiolase-like"/>
</dbReference>
<dbReference type="PANTHER" id="PTHR43775">
    <property type="entry name" value="FATTY ACID SYNTHASE"/>
    <property type="match status" value="1"/>
</dbReference>
<dbReference type="PANTHER" id="PTHR43775:SF13">
    <property type="entry name" value="POLYKETIDE SYNTHASE 1"/>
    <property type="match status" value="1"/>
</dbReference>
<dbReference type="Pfam" id="PF23297">
    <property type="entry name" value="ACP_SdgA_C"/>
    <property type="match status" value="1"/>
</dbReference>
<dbReference type="Pfam" id="PF00698">
    <property type="entry name" value="Acyl_transf_1"/>
    <property type="match status" value="1"/>
</dbReference>
<dbReference type="Pfam" id="PF08240">
    <property type="entry name" value="ADH_N"/>
    <property type="match status" value="1"/>
</dbReference>
<dbReference type="Pfam" id="PF13602">
    <property type="entry name" value="ADH_zinc_N_2"/>
    <property type="match status" value="1"/>
</dbReference>
<dbReference type="Pfam" id="PF16197">
    <property type="entry name" value="KAsynt_C_assoc"/>
    <property type="match status" value="1"/>
</dbReference>
<dbReference type="Pfam" id="PF00109">
    <property type="entry name" value="ketoacyl-synt"/>
    <property type="match status" value="1"/>
</dbReference>
<dbReference type="Pfam" id="PF02801">
    <property type="entry name" value="Ketoacyl-synt_C"/>
    <property type="match status" value="1"/>
</dbReference>
<dbReference type="Pfam" id="PF08659">
    <property type="entry name" value="KR"/>
    <property type="match status" value="1"/>
</dbReference>
<dbReference type="Pfam" id="PF21089">
    <property type="entry name" value="PKS_DH_N"/>
    <property type="match status" value="1"/>
</dbReference>
<dbReference type="Pfam" id="PF14765">
    <property type="entry name" value="PS-DH"/>
    <property type="match status" value="1"/>
</dbReference>
<dbReference type="SMART" id="SM00827">
    <property type="entry name" value="PKS_AT"/>
    <property type="match status" value="1"/>
</dbReference>
<dbReference type="SMART" id="SM00826">
    <property type="entry name" value="PKS_DH"/>
    <property type="match status" value="1"/>
</dbReference>
<dbReference type="SMART" id="SM00829">
    <property type="entry name" value="PKS_ER"/>
    <property type="match status" value="1"/>
</dbReference>
<dbReference type="SMART" id="SM00822">
    <property type="entry name" value="PKS_KR"/>
    <property type="match status" value="1"/>
</dbReference>
<dbReference type="SMART" id="SM00825">
    <property type="entry name" value="PKS_KS"/>
    <property type="match status" value="1"/>
</dbReference>
<dbReference type="SMART" id="SM00823">
    <property type="entry name" value="PKS_PP"/>
    <property type="match status" value="1"/>
</dbReference>
<dbReference type="SUPFAM" id="SSF47336">
    <property type="entry name" value="ACP-like"/>
    <property type="match status" value="1"/>
</dbReference>
<dbReference type="SUPFAM" id="SSF52151">
    <property type="entry name" value="FabD/lysophospholipase-like"/>
    <property type="match status" value="1"/>
</dbReference>
<dbReference type="SUPFAM" id="SSF50129">
    <property type="entry name" value="GroES-like"/>
    <property type="match status" value="1"/>
</dbReference>
<dbReference type="SUPFAM" id="SSF51735">
    <property type="entry name" value="NAD(P)-binding Rossmann-fold domains"/>
    <property type="match status" value="2"/>
</dbReference>
<dbReference type="SUPFAM" id="SSF55048">
    <property type="entry name" value="Probable ACP-binding domain of malonyl-CoA ACP transacylase"/>
    <property type="match status" value="1"/>
</dbReference>
<dbReference type="SUPFAM" id="SSF53901">
    <property type="entry name" value="Thiolase-like"/>
    <property type="match status" value="1"/>
</dbReference>
<dbReference type="PROSITE" id="PS50075">
    <property type="entry name" value="CARRIER"/>
    <property type="match status" value="1"/>
</dbReference>
<dbReference type="PROSITE" id="PS00606">
    <property type="entry name" value="KS3_1"/>
    <property type="match status" value="1"/>
</dbReference>
<dbReference type="PROSITE" id="PS52004">
    <property type="entry name" value="KS3_2"/>
    <property type="match status" value="1"/>
</dbReference>
<dbReference type="PROSITE" id="PS52019">
    <property type="entry name" value="PKS_MFAS_DH"/>
    <property type="match status" value="1"/>
</dbReference>
<comment type="function">
    <text evidence="7">Highly-reducing polyketide synthase; part of the gene cluster that mediates the biosynthesis of liamocins, glycolipids (also called heavy oils) composed of a single mannitol or arabitol headgroup linked to either three, four or even six 3,5-dihydroxydecanoic ester tail-groups (PubMed:32003433). Within the pathway, PKS1 is responsible for biosynthesis of 3,5-dihydroxydecanoic acid from acetyl-CoA and malonyl-CoA (PubMed:32003433). A phosphopantetheine transferase (PPTase) activates the HR-PKS (PubMed:32003433). The esterase EST1 then catalyzes ester bond formation between 3,5-dihydroxydecanoic acid and mannitol (provided by the mannitol-1-phosphate 5-dehydrogenase and the NADP-dependent mannitol dehydrogenase) or arabinol (provided by the L-arabinitol 4-dehydrogenase) (PubMed:32003433).</text>
</comment>
<comment type="cofactor">
    <cofactor evidence="2">
        <name>pantetheine 4'-phosphate</name>
        <dbReference type="ChEBI" id="CHEBI:47942"/>
    </cofactor>
</comment>
<comment type="induction">
    <text evidence="7 8 9">Expression is induced by the cluster-specific transcription factor GAL1 (PubMed:32003433). Expression is also regulated by the cAMP-PKA and HOG1 signaling pathways via the transcriptional activator MSN2 (PubMed:33375973). Moreover, expression is also increased at low pH by the pH signaling transcription factor PACC (PubMed:37740661).</text>
</comment>
<comment type="domain">
    <text evidence="11">Multidomain protein; including a ketosynthase (KS) that catalyzes repeated decarboxylative condensation to elongate the polyketide backbone; a malonyl-CoA:ACP transacylase (MAT) that selects and transfers the extender unit malonyl-CoA; a dehydratase (DH) domain that reduces hydroxyl groups to enoyl groups; an enoylreductase (ER) domain that reduces enoyl groups to alkyl group; a ketoreductase (KR) domain that catalyzes beta-ketoreduction steps; and an acyl-carrier protein (ACP) that serves as the tether of the growing and completed polyketide via its phosphopantetheinyl arm. The ER domain was found to be much shorter than those of other fungal RD-PKSs, and in its nucleotide-binding domain (G/AxGxxG), the second glycine is replaced by a serine residue. This suggests that this domain is non-functional and is consistent with the absence of reduction of the double bonds formed by the DH domain in the PKSF products.</text>
</comment>
<comment type="disruption phenotype">
    <text evidence="7">Completely abolishes the ability to produce any liamocins.</text>
</comment>
<comment type="biotechnology">
    <text evidence="5 6">Liamocins have high bioactivity against the pathogenic bacteria Streptococcus spp. and can be potential new specific inhibitors of oral streptococcal biofilms without affecting normal oral microflora (PubMed:30627519). Liamocins are also able to inhibit human cancer cell lines such as breast cancer cell lines T47D and SK-BR3 or the cervical cancer cell line HeLa (PubMed:21293903).</text>
</comment>